<name>RIHA_ECOLC</name>
<proteinExistence type="inferred from homology"/>
<feature type="chain" id="PRO_1000087434" description="Pyrimidine-specific ribonucleoside hydrolase RihA">
    <location>
        <begin position="1"/>
        <end position="311"/>
    </location>
</feature>
<feature type="active site" evidence="1">
    <location>
        <position position="240"/>
    </location>
</feature>
<dbReference type="EC" id="3.2.-.-" evidence="1"/>
<dbReference type="EMBL" id="CP000946">
    <property type="protein sequence ID" value="ACA78619.1"/>
    <property type="molecule type" value="Genomic_DNA"/>
</dbReference>
<dbReference type="RefSeq" id="WP_001207501.1">
    <property type="nucleotide sequence ID" value="NZ_MTFT01000005.1"/>
</dbReference>
<dbReference type="SMR" id="B1IYF7"/>
<dbReference type="KEGG" id="ecl:EcolC_2994"/>
<dbReference type="HOGENOM" id="CLU_036838_2_0_6"/>
<dbReference type="GO" id="GO:0005829">
    <property type="term" value="C:cytosol"/>
    <property type="evidence" value="ECO:0007669"/>
    <property type="project" value="TreeGrafter"/>
</dbReference>
<dbReference type="GO" id="GO:0008477">
    <property type="term" value="F:purine nucleosidase activity"/>
    <property type="evidence" value="ECO:0007669"/>
    <property type="project" value="TreeGrafter"/>
</dbReference>
<dbReference type="GO" id="GO:0045437">
    <property type="term" value="F:uridine nucleosidase activity"/>
    <property type="evidence" value="ECO:0007669"/>
    <property type="project" value="InterPro"/>
</dbReference>
<dbReference type="GO" id="GO:0015949">
    <property type="term" value="P:nucleobase-containing small molecule interconversion"/>
    <property type="evidence" value="ECO:0007669"/>
    <property type="project" value="InterPro"/>
</dbReference>
<dbReference type="GO" id="GO:0006152">
    <property type="term" value="P:purine nucleoside catabolic process"/>
    <property type="evidence" value="ECO:0007669"/>
    <property type="project" value="TreeGrafter"/>
</dbReference>
<dbReference type="GO" id="GO:0006206">
    <property type="term" value="P:pyrimidine nucleobase metabolic process"/>
    <property type="evidence" value="ECO:0007669"/>
    <property type="project" value="UniProtKB-UniRule"/>
</dbReference>
<dbReference type="CDD" id="cd02651">
    <property type="entry name" value="nuc_hydro_IU_UC_XIUA"/>
    <property type="match status" value="1"/>
</dbReference>
<dbReference type="FunFam" id="3.90.245.10:FF:000001">
    <property type="entry name" value="Pyrimidine-specific ribonucleoside hydrolase RihA"/>
    <property type="match status" value="1"/>
</dbReference>
<dbReference type="Gene3D" id="3.90.245.10">
    <property type="entry name" value="Ribonucleoside hydrolase-like"/>
    <property type="match status" value="1"/>
</dbReference>
<dbReference type="HAMAP" id="MF_01431">
    <property type="entry name" value="Pyrim_hydro_RihA"/>
    <property type="match status" value="1"/>
</dbReference>
<dbReference type="InterPro" id="IPR015910">
    <property type="entry name" value="I/U_nuclsd_hydro_CS"/>
</dbReference>
<dbReference type="InterPro" id="IPR001910">
    <property type="entry name" value="Inosine/uridine_hydrolase_dom"/>
</dbReference>
<dbReference type="InterPro" id="IPR023186">
    <property type="entry name" value="IUNH"/>
</dbReference>
<dbReference type="InterPro" id="IPR022975">
    <property type="entry name" value="Pyrim_hydro_RihA"/>
</dbReference>
<dbReference type="InterPro" id="IPR036452">
    <property type="entry name" value="Ribo_hydro-like"/>
</dbReference>
<dbReference type="NCBIfam" id="NF007761">
    <property type="entry name" value="PRK10443.1"/>
    <property type="match status" value="1"/>
</dbReference>
<dbReference type="PANTHER" id="PTHR12304">
    <property type="entry name" value="INOSINE-URIDINE PREFERRING NUCLEOSIDE HYDROLASE"/>
    <property type="match status" value="1"/>
</dbReference>
<dbReference type="PANTHER" id="PTHR12304:SF4">
    <property type="entry name" value="URIDINE NUCLEOSIDASE"/>
    <property type="match status" value="1"/>
</dbReference>
<dbReference type="Pfam" id="PF01156">
    <property type="entry name" value="IU_nuc_hydro"/>
    <property type="match status" value="1"/>
</dbReference>
<dbReference type="SUPFAM" id="SSF53590">
    <property type="entry name" value="Nucleoside hydrolase"/>
    <property type="match status" value="1"/>
</dbReference>
<dbReference type="PROSITE" id="PS01247">
    <property type="entry name" value="IUNH"/>
    <property type="match status" value="1"/>
</dbReference>
<gene>
    <name evidence="1" type="primary">rihA</name>
    <name type="ordered locus">EcolC_2994</name>
</gene>
<reference key="1">
    <citation type="submission" date="2008-02" db="EMBL/GenBank/DDBJ databases">
        <title>Complete sequence of Escherichia coli C str. ATCC 8739.</title>
        <authorList>
            <person name="Copeland A."/>
            <person name="Lucas S."/>
            <person name="Lapidus A."/>
            <person name="Glavina del Rio T."/>
            <person name="Dalin E."/>
            <person name="Tice H."/>
            <person name="Bruce D."/>
            <person name="Goodwin L."/>
            <person name="Pitluck S."/>
            <person name="Kiss H."/>
            <person name="Brettin T."/>
            <person name="Detter J.C."/>
            <person name="Han C."/>
            <person name="Kuske C.R."/>
            <person name="Schmutz J."/>
            <person name="Larimer F."/>
            <person name="Land M."/>
            <person name="Hauser L."/>
            <person name="Kyrpides N."/>
            <person name="Mikhailova N."/>
            <person name="Ingram L."/>
            <person name="Richardson P."/>
        </authorList>
    </citation>
    <scope>NUCLEOTIDE SEQUENCE [LARGE SCALE GENOMIC DNA]</scope>
    <source>
        <strain>ATCC 8739 / DSM 1576 / NBRC 3972 / NCIMB 8545 / WDCM 00012 / Crooks</strain>
    </source>
</reference>
<comment type="function">
    <text evidence="1">Hydrolyzes with equal efficiency cytidine or uridine to ribose and cytosine or uracil, respectively.</text>
</comment>
<comment type="similarity">
    <text evidence="1">Belongs to the IUNH family. RihA subfamily.</text>
</comment>
<sequence length="311" mass="33793">MALPILLDCDPGHDDAIAIVLALASPELDVKAITSSAGNQTPEKTLRNVLRMLTLLNRTDIPVAGGAVKPLMRELIIADNVHGESGLDGPALPEPAFAPQNCTAVELMAKTLRESAEPVTIVSTGPQTNVALLLNSHPELHSKIARIVIMGGAMGLGNWTPAAEFNIYVDPEAAEIVFQSGIPVVMAGLDVTHKAQIHVEDTERFRAIGNPVSTIVAELLDFFLEYHKDEKWGFVGAPLHDPCTIAWLLKPELFTSVERWVGVETQGKYTQGMTVVDYYYLTGNKPNATVMVDVDRQGFVDLLADRLKFYA</sequence>
<evidence type="ECO:0000255" key="1">
    <source>
        <dbReference type="HAMAP-Rule" id="MF_01431"/>
    </source>
</evidence>
<protein>
    <recommendedName>
        <fullName evidence="1">Pyrimidine-specific ribonucleoside hydrolase RihA</fullName>
        <ecNumber evidence="1">3.2.-.-</ecNumber>
    </recommendedName>
    <alternativeName>
        <fullName evidence="1">Cytidine/uridine-specific hydrolase</fullName>
    </alternativeName>
</protein>
<organism>
    <name type="scientific">Escherichia coli (strain ATCC 8739 / DSM 1576 / NBRC 3972 / NCIMB 8545 / WDCM 00012 / Crooks)</name>
    <dbReference type="NCBI Taxonomy" id="481805"/>
    <lineage>
        <taxon>Bacteria</taxon>
        <taxon>Pseudomonadati</taxon>
        <taxon>Pseudomonadota</taxon>
        <taxon>Gammaproteobacteria</taxon>
        <taxon>Enterobacterales</taxon>
        <taxon>Enterobacteriaceae</taxon>
        <taxon>Escherichia</taxon>
    </lineage>
</organism>
<accession>B1IYF7</accession>
<keyword id="KW-0326">Glycosidase</keyword>
<keyword id="KW-0378">Hydrolase</keyword>